<protein>
    <recommendedName>
        <fullName evidence="1">Ribonuclease VapC38</fullName>
        <shortName evidence="1">RNase VapC38</shortName>
        <ecNumber evidence="1">3.1.-.-</ecNumber>
    </recommendedName>
    <alternativeName>
        <fullName evidence="1">Toxin VapC38</fullName>
    </alternativeName>
</protein>
<keyword id="KW-0378">Hydrolase</keyword>
<keyword id="KW-0460">Magnesium</keyword>
<keyword id="KW-0479">Metal-binding</keyword>
<keyword id="KW-0540">Nuclease</keyword>
<keyword id="KW-1185">Reference proteome</keyword>
<keyword id="KW-0964">Secreted</keyword>
<keyword id="KW-1277">Toxin-antitoxin system</keyword>
<feature type="chain" id="PRO_0000407893" description="Ribonuclease VapC38">
    <location>
        <begin position="1"/>
        <end position="141"/>
    </location>
</feature>
<feature type="binding site" evidence="1">
    <location>
        <position position="5"/>
    </location>
    <ligand>
        <name>Mg(2+)</name>
        <dbReference type="ChEBI" id="CHEBI:18420"/>
    </ligand>
</feature>
<feature type="binding site" evidence="1">
    <location>
        <position position="102"/>
    </location>
    <ligand>
        <name>Mg(2+)</name>
        <dbReference type="ChEBI" id="CHEBI:18420"/>
    </ligand>
</feature>
<dbReference type="EC" id="3.1.-.-" evidence="1"/>
<dbReference type="EMBL" id="AL123456">
    <property type="protein sequence ID" value="CCP45288.1"/>
    <property type="molecule type" value="Genomic_DNA"/>
</dbReference>
<dbReference type="PIR" id="E70869">
    <property type="entry name" value="E70869"/>
</dbReference>
<dbReference type="RefSeq" id="NP_217010.1">
    <property type="nucleotide sequence ID" value="NC_000962.3"/>
</dbReference>
<dbReference type="RefSeq" id="WP_003412752.1">
    <property type="nucleotide sequence ID" value="NZ_NVQJ01000063.1"/>
</dbReference>
<dbReference type="SMR" id="O53219"/>
<dbReference type="STRING" id="83332.Rv2494"/>
<dbReference type="PaxDb" id="83332-Rv2494"/>
<dbReference type="DNASU" id="887700"/>
<dbReference type="GeneID" id="887700"/>
<dbReference type="KEGG" id="mtu:Rv2494"/>
<dbReference type="KEGG" id="mtv:RVBD_2494"/>
<dbReference type="TubercuList" id="Rv2494"/>
<dbReference type="eggNOG" id="COG1848">
    <property type="taxonomic scope" value="Bacteria"/>
</dbReference>
<dbReference type="InParanoid" id="O53219"/>
<dbReference type="OrthoDB" id="196567at2"/>
<dbReference type="PhylomeDB" id="O53219"/>
<dbReference type="Proteomes" id="UP000001584">
    <property type="component" value="Chromosome"/>
</dbReference>
<dbReference type="GO" id="GO:0005576">
    <property type="term" value="C:extracellular region"/>
    <property type="evidence" value="ECO:0007669"/>
    <property type="project" value="UniProtKB-SubCell"/>
</dbReference>
<dbReference type="GO" id="GO:0000287">
    <property type="term" value="F:magnesium ion binding"/>
    <property type="evidence" value="ECO:0007669"/>
    <property type="project" value="UniProtKB-UniRule"/>
</dbReference>
<dbReference type="GO" id="GO:0004540">
    <property type="term" value="F:RNA nuclease activity"/>
    <property type="evidence" value="ECO:0007669"/>
    <property type="project" value="InterPro"/>
</dbReference>
<dbReference type="GO" id="GO:0045926">
    <property type="term" value="P:negative regulation of growth"/>
    <property type="evidence" value="ECO:0007669"/>
    <property type="project" value="UniProtKB-ARBA"/>
</dbReference>
<dbReference type="HAMAP" id="MF_00265">
    <property type="entry name" value="VapC_Nob1"/>
    <property type="match status" value="1"/>
</dbReference>
<dbReference type="InterPro" id="IPR006226">
    <property type="entry name" value="Mtu_PIN"/>
</dbReference>
<dbReference type="InterPro" id="IPR029060">
    <property type="entry name" value="PIN-like_dom_sf"/>
</dbReference>
<dbReference type="InterPro" id="IPR002716">
    <property type="entry name" value="PIN_dom"/>
</dbReference>
<dbReference type="InterPro" id="IPR022907">
    <property type="entry name" value="VapC_family"/>
</dbReference>
<dbReference type="NCBIfam" id="TIGR00028">
    <property type="entry name" value="Mtu_PIN_fam"/>
    <property type="match status" value="1"/>
</dbReference>
<dbReference type="Pfam" id="PF01850">
    <property type="entry name" value="PIN"/>
    <property type="match status" value="1"/>
</dbReference>
<dbReference type="SUPFAM" id="SSF88723">
    <property type="entry name" value="PIN domain-like"/>
    <property type="match status" value="1"/>
</dbReference>
<evidence type="ECO:0000255" key="1">
    <source>
        <dbReference type="HAMAP-Rule" id="MF_00265"/>
    </source>
</evidence>
<evidence type="ECO:0000269" key="2">
    <source>
    </source>
</evidence>
<comment type="function">
    <text evidence="1">Toxic component of a type II toxin-antitoxin (TA) system. An RNase. Its cognate antitoxin is VapB38 (By similarity).</text>
</comment>
<comment type="cofactor">
    <cofactor evidence="1">
        <name>Mg(2+)</name>
        <dbReference type="ChEBI" id="CHEBI:18420"/>
    </cofactor>
</comment>
<comment type="subcellular location">
    <subcellularLocation>
        <location>Secreted</location>
    </subcellularLocation>
    <text evidence="2">Following 6 weeks of nutrient starvation.</text>
</comment>
<comment type="similarity">
    <text evidence="1">Belongs to the PINc/VapC protein family.</text>
</comment>
<proteinExistence type="evidence at protein level"/>
<accession>O53219</accession>
<accession>L0TCI7</accession>
<name>VPC38_MYCTU</name>
<organism>
    <name type="scientific">Mycobacterium tuberculosis (strain ATCC 25618 / H37Rv)</name>
    <dbReference type="NCBI Taxonomy" id="83332"/>
    <lineage>
        <taxon>Bacteria</taxon>
        <taxon>Bacillati</taxon>
        <taxon>Actinomycetota</taxon>
        <taxon>Actinomycetes</taxon>
        <taxon>Mycobacteriales</taxon>
        <taxon>Mycobacteriaceae</taxon>
        <taxon>Mycobacterium</taxon>
        <taxon>Mycobacterium tuberculosis complex</taxon>
    </lineage>
</organism>
<sequence length="141" mass="15425">MALLDVNALVALAWDSHIHHARIREWFTANATLGWATCPLTEAGFVRVSTNPKVLPSAIGIADARRVLVALRAVGGHRFLADDVSLVDDDVPLIVGYRQVTDAHLLTLARRRGVRLVTFDAGVFTLAQQRPKTPVELLTIL</sequence>
<gene>
    <name evidence="1" type="primary">vapC38</name>
    <name type="ordered locus">Rv2494</name>
</gene>
<reference key="1">
    <citation type="journal article" date="1998" name="Nature">
        <title>Deciphering the biology of Mycobacterium tuberculosis from the complete genome sequence.</title>
        <authorList>
            <person name="Cole S.T."/>
            <person name="Brosch R."/>
            <person name="Parkhill J."/>
            <person name="Garnier T."/>
            <person name="Churcher C.M."/>
            <person name="Harris D.E."/>
            <person name="Gordon S.V."/>
            <person name="Eiglmeier K."/>
            <person name="Gas S."/>
            <person name="Barry C.E. III"/>
            <person name="Tekaia F."/>
            <person name="Badcock K."/>
            <person name="Basham D."/>
            <person name="Brown D."/>
            <person name="Chillingworth T."/>
            <person name="Connor R."/>
            <person name="Davies R.M."/>
            <person name="Devlin K."/>
            <person name="Feltwell T."/>
            <person name="Gentles S."/>
            <person name="Hamlin N."/>
            <person name="Holroyd S."/>
            <person name="Hornsby T."/>
            <person name="Jagels K."/>
            <person name="Krogh A."/>
            <person name="McLean J."/>
            <person name="Moule S."/>
            <person name="Murphy L.D."/>
            <person name="Oliver S."/>
            <person name="Osborne J."/>
            <person name="Quail M.A."/>
            <person name="Rajandream M.A."/>
            <person name="Rogers J."/>
            <person name="Rutter S."/>
            <person name="Seeger K."/>
            <person name="Skelton S."/>
            <person name="Squares S."/>
            <person name="Squares R."/>
            <person name="Sulston J.E."/>
            <person name="Taylor K."/>
            <person name="Whitehead S."/>
            <person name="Barrell B.G."/>
        </authorList>
    </citation>
    <scope>NUCLEOTIDE SEQUENCE [LARGE SCALE GENOMIC DNA]</scope>
    <source>
        <strain>ATCC 25618 / H37Rv</strain>
    </source>
</reference>
<reference key="2">
    <citation type="journal article" date="2009" name="PLoS Genet.">
        <title>Comprehensive functional analysis of Mycobacterium tuberculosis toxin-antitoxin systems: implications for pathogenesis, stress responses, and evolution.</title>
        <authorList>
            <person name="Ramage H.R."/>
            <person name="Connolly L.E."/>
            <person name="Cox J.S."/>
        </authorList>
    </citation>
    <scope>POSSIBLE FUNCTION</scope>
    <source>
        <strain>ATCC 35801 / TMC 107 / Erdman</strain>
    </source>
</reference>
<reference key="3">
    <citation type="journal article" date="2011" name="Mol. Cell. Proteomics">
        <title>Proteogenomic analysis of Mycobacterium tuberculosis by high resolution mass spectrometry.</title>
        <authorList>
            <person name="Kelkar D.S."/>
            <person name="Kumar D."/>
            <person name="Kumar P."/>
            <person name="Balakrishnan L."/>
            <person name="Muthusamy B."/>
            <person name="Yadav A.K."/>
            <person name="Shrivastava P."/>
            <person name="Marimuthu A."/>
            <person name="Anand S."/>
            <person name="Sundaram H."/>
            <person name="Kingsbury R."/>
            <person name="Harsha H.C."/>
            <person name="Nair B."/>
            <person name="Prasad T.S."/>
            <person name="Chauhan D.S."/>
            <person name="Katoch K."/>
            <person name="Katoch V.M."/>
            <person name="Kumar P."/>
            <person name="Chaerkady R."/>
            <person name="Ramachandran S."/>
            <person name="Dash D."/>
            <person name="Pandey A."/>
        </authorList>
    </citation>
    <scope>IDENTIFICATION BY MASS SPECTROMETRY [LARGE SCALE ANALYSIS]</scope>
    <source>
        <strain>ATCC 25618 / H37Rv</strain>
    </source>
</reference>
<reference key="4">
    <citation type="journal article" date="2013" name="Mol. Cell. Proteomics">
        <title>Proteomic profiling of Mycobacterium tuberculosis identifies nutrient-starvation-responsive toxin-antitoxin systems.</title>
        <authorList>
            <person name="Albrethsen J."/>
            <person name="Agner J."/>
            <person name="Piersma S.R."/>
            <person name="Hoejrup P."/>
            <person name="Pham T.V."/>
            <person name="Weldingh K."/>
            <person name="Jimenez C.R."/>
            <person name="Andersen P."/>
            <person name="Rosenkrands I."/>
        </authorList>
    </citation>
    <scope>IDENTIFICATION BY MASS SPECTROMETRY</scope>
    <scope>SUBCELLULAR LOCATION</scope>
    <source>
        <strain>ATCC 27294 / TMC 102 / H37Rv</strain>
    </source>
</reference>